<sequence>MALRFPRFSQGLAQDPTTRRIWFGIATAHDFESHDDITEERLYQNIFASHFGQLAIIFLWTSGNLFHVAWQGNFESWVQDPLHVRPIAHAIWDPHFGQPAVEAFTRGGALGPVNIAYSGVYQWWYTIGLRTNEDLYTGALFLLFLSAISLIAGWLHLQPKWKPSVSWFKNAESRLNHHLSGLFGVSSLAWTGHLVHVAIPASRGEYVRWNNFLDVLPHPQGLGPLFTGQWNLYAQNPDSSSHLFGTAQGAGTAILTLLGGFHPQTQSLWLTDIAHHHLAIAFIFLVAGHMYRTNFGIGHSMKDLLDAHIPPGGRLGRGHKGLYDTINNSLHFQLGLALASLGVITSLVAQHMYSLPAYAFIAQDFTTQAALYTHHQYIAGFIMTGAFAHGAIFFIRDYNPEQNEDNVLARMLEHKEAIISHLSWASLFLGFHTLGLYVHNDVMLAFGTPEKQILIEPIFAQWIQSAHGKTSYGFDVLLSSTSGPAFNAGRSIWLPGWLNAVNENSNSLFLTIGPGDFLVHHAIALGLHTTTLILVKGALDARGSKLMPDKKDFGYSFPCDGPGRGGTCDISAWDAFYLAVFWMLNTIGWVTFYWHWKHITLWQGNVSQFNESSTYLMGWLRDYLWLNSSQLINGYNPFGMNSLSVWAWMFLFGHLVWATGFMFLISWRGYWQELIETLAWAHERTPLANLIRWRDKPVALSIVQARLVGLAHFSVGYIFTYAAFLIASTSGKFG</sequence>
<gene>
    <name evidence="1" type="primary">psaB</name>
</gene>
<proteinExistence type="inferred from homology"/>
<protein>
    <recommendedName>
        <fullName evidence="1">Photosystem I P700 chlorophyll a apoprotein A2</fullName>
        <ecNumber evidence="1">1.97.1.12</ecNumber>
    </recommendedName>
    <alternativeName>
        <fullName evidence="1">PSI-B</fullName>
    </alternativeName>
    <alternativeName>
        <fullName evidence="1">PsaB</fullName>
    </alternativeName>
</protein>
<reference key="1">
    <citation type="journal article" date="2006" name="Mol. Genet. Genomics">
        <title>The chloroplast genome of Nicotiana sylvestris and Nicotiana tomentosiformis: complete sequencing confirms that the Nicotiana sylvestris progenitor is the maternal genome donor of Nicotiana tabacum.</title>
        <authorList>
            <person name="Yukawa M."/>
            <person name="Tsudzuki T."/>
            <person name="Sugiura M."/>
        </authorList>
    </citation>
    <scope>NUCLEOTIDE SEQUENCE [LARGE SCALE GENOMIC DNA]</scope>
</reference>
<comment type="function">
    <text evidence="1">PsaA and PsaB bind P700, the primary electron donor of photosystem I (PSI), as well as the electron acceptors A0, A1 and FX. PSI is a plastocyanin-ferredoxin oxidoreductase, converting photonic excitation into a charge separation, which transfers an electron from the donor P700 chlorophyll pair to the spectroscopically characterized acceptors A0, A1, FX, FA and FB in turn. Oxidized P700 is reduced on the lumenal side of the thylakoid membrane by plastocyanin.</text>
</comment>
<comment type="catalytic activity">
    <reaction evidence="1">
        <text>reduced [plastocyanin] + hnu + oxidized [2Fe-2S]-[ferredoxin] = oxidized [plastocyanin] + reduced [2Fe-2S]-[ferredoxin]</text>
        <dbReference type="Rhea" id="RHEA:30407"/>
        <dbReference type="Rhea" id="RHEA-COMP:10000"/>
        <dbReference type="Rhea" id="RHEA-COMP:10001"/>
        <dbReference type="Rhea" id="RHEA-COMP:10039"/>
        <dbReference type="Rhea" id="RHEA-COMP:10040"/>
        <dbReference type="ChEBI" id="CHEBI:29036"/>
        <dbReference type="ChEBI" id="CHEBI:30212"/>
        <dbReference type="ChEBI" id="CHEBI:33737"/>
        <dbReference type="ChEBI" id="CHEBI:33738"/>
        <dbReference type="ChEBI" id="CHEBI:49552"/>
        <dbReference type="EC" id="1.97.1.12"/>
    </reaction>
</comment>
<comment type="cofactor">
    <text evidence="1">P700 is a chlorophyll a/chlorophyll a' dimer, A0 is one or more chlorophyll a, A1 is one or both phylloquinones and FX is a shared 4Fe-4S iron-sulfur center.</text>
</comment>
<comment type="subunit">
    <text evidence="1">The PsaA/B heterodimer binds the P700 chlorophyll special pair and subsequent electron acceptors. PSI consists of a core antenna complex that captures photons, and an electron transfer chain that converts photonic excitation into a charge separation. The eukaryotic PSI reaction center is composed of at least 11 subunits.</text>
</comment>
<comment type="subcellular location">
    <subcellularLocation>
        <location>Plastid</location>
        <location>Chloroplast thylakoid membrane</location>
        <topology>Multi-pass membrane protein</topology>
    </subcellularLocation>
</comment>
<comment type="similarity">
    <text evidence="1">Belongs to the PsaA/PsaB family.</text>
</comment>
<evidence type="ECO:0000255" key="1">
    <source>
        <dbReference type="HAMAP-Rule" id="MF_00482"/>
    </source>
</evidence>
<accession>Q3C1H9</accession>
<organism>
    <name type="scientific">Nicotiana sylvestris</name>
    <name type="common">Wood tobacco</name>
    <name type="synonym">South American tobacco</name>
    <dbReference type="NCBI Taxonomy" id="4096"/>
    <lineage>
        <taxon>Eukaryota</taxon>
        <taxon>Viridiplantae</taxon>
        <taxon>Streptophyta</taxon>
        <taxon>Embryophyta</taxon>
        <taxon>Tracheophyta</taxon>
        <taxon>Spermatophyta</taxon>
        <taxon>Magnoliopsida</taxon>
        <taxon>eudicotyledons</taxon>
        <taxon>Gunneridae</taxon>
        <taxon>Pentapetalae</taxon>
        <taxon>asterids</taxon>
        <taxon>lamiids</taxon>
        <taxon>Solanales</taxon>
        <taxon>Solanaceae</taxon>
        <taxon>Nicotianoideae</taxon>
        <taxon>Nicotianeae</taxon>
        <taxon>Nicotiana</taxon>
    </lineage>
</organism>
<name>PSAB_NICSY</name>
<feature type="chain" id="PRO_0000277122" description="Photosystem I P700 chlorophyll a apoprotein A2">
    <location>
        <begin position="1"/>
        <end position="734"/>
    </location>
</feature>
<feature type="transmembrane region" description="Helical; Name=I" evidence="1">
    <location>
        <begin position="46"/>
        <end position="69"/>
    </location>
</feature>
<feature type="transmembrane region" description="Helical; Name=II" evidence="1">
    <location>
        <begin position="135"/>
        <end position="158"/>
    </location>
</feature>
<feature type="transmembrane region" description="Helical; Name=III" evidence="1">
    <location>
        <begin position="175"/>
        <end position="199"/>
    </location>
</feature>
<feature type="transmembrane region" description="Helical; Name=IV" evidence="1">
    <location>
        <begin position="273"/>
        <end position="291"/>
    </location>
</feature>
<feature type="transmembrane region" description="Helical; Name=V" evidence="1">
    <location>
        <begin position="330"/>
        <end position="353"/>
    </location>
</feature>
<feature type="transmembrane region" description="Helical; Name=VI" evidence="1">
    <location>
        <begin position="369"/>
        <end position="395"/>
    </location>
</feature>
<feature type="transmembrane region" description="Helical; Name=VII" evidence="1">
    <location>
        <begin position="417"/>
        <end position="439"/>
    </location>
</feature>
<feature type="transmembrane region" description="Helical; Name=VIII" evidence="1">
    <location>
        <begin position="517"/>
        <end position="535"/>
    </location>
</feature>
<feature type="transmembrane region" description="Helical; Name=IX" evidence="1">
    <location>
        <begin position="575"/>
        <end position="596"/>
    </location>
</feature>
<feature type="transmembrane region" description="Helical; Name=X" evidence="1">
    <location>
        <begin position="643"/>
        <end position="665"/>
    </location>
</feature>
<feature type="transmembrane region" description="Helical; Name=XI" evidence="1">
    <location>
        <begin position="707"/>
        <end position="727"/>
    </location>
</feature>
<feature type="binding site" evidence="1">
    <location>
        <position position="559"/>
    </location>
    <ligand>
        <name>[4Fe-4S] cluster</name>
        <dbReference type="ChEBI" id="CHEBI:49883"/>
        <note>ligand shared between dimeric partners</note>
    </ligand>
</feature>
<feature type="binding site" evidence="1">
    <location>
        <position position="568"/>
    </location>
    <ligand>
        <name>[4Fe-4S] cluster</name>
        <dbReference type="ChEBI" id="CHEBI:49883"/>
        <note>ligand shared between dimeric partners</note>
    </ligand>
</feature>
<feature type="binding site" description="axial binding residue" evidence="1">
    <location>
        <position position="654"/>
    </location>
    <ligand>
        <name>chlorophyll a</name>
        <dbReference type="ChEBI" id="CHEBI:58416"/>
        <label>B1</label>
    </ligand>
    <ligandPart>
        <name>Mg</name>
        <dbReference type="ChEBI" id="CHEBI:25107"/>
    </ligandPart>
</feature>
<feature type="binding site" description="axial binding residue" evidence="1">
    <location>
        <position position="662"/>
    </location>
    <ligand>
        <name>chlorophyll a</name>
        <dbReference type="ChEBI" id="CHEBI:58416"/>
        <label>B3</label>
    </ligand>
    <ligandPart>
        <name>Mg</name>
        <dbReference type="ChEBI" id="CHEBI:25107"/>
    </ligandPart>
</feature>
<feature type="binding site" evidence="1">
    <location>
        <position position="670"/>
    </location>
    <ligand>
        <name>chlorophyll a</name>
        <dbReference type="ChEBI" id="CHEBI:58416"/>
        <label>B3</label>
    </ligand>
</feature>
<feature type="binding site" evidence="1">
    <location>
        <position position="671"/>
    </location>
    <ligand>
        <name>phylloquinone</name>
        <dbReference type="ChEBI" id="CHEBI:18067"/>
        <label>B</label>
    </ligand>
</feature>
<keyword id="KW-0004">4Fe-4S</keyword>
<keyword id="KW-0148">Chlorophyll</keyword>
<keyword id="KW-0150">Chloroplast</keyword>
<keyword id="KW-0157">Chromophore</keyword>
<keyword id="KW-0249">Electron transport</keyword>
<keyword id="KW-0408">Iron</keyword>
<keyword id="KW-0411">Iron-sulfur</keyword>
<keyword id="KW-0460">Magnesium</keyword>
<keyword id="KW-0472">Membrane</keyword>
<keyword id="KW-0479">Metal-binding</keyword>
<keyword id="KW-0560">Oxidoreductase</keyword>
<keyword id="KW-0602">Photosynthesis</keyword>
<keyword id="KW-0603">Photosystem I</keyword>
<keyword id="KW-0934">Plastid</keyword>
<keyword id="KW-1185">Reference proteome</keyword>
<keyword id="KW-0793">Thylakoid</keyword>
<keyword id="KW-0812">Transmembrane</keyword>
<keyword id="KW-1133">Transmembrane helix</keyword>
<keyword id="KW-0813">Transport</keyword>
<dbReference type="EC" id="1.97.1.12" evidence="1"/>
<dbReference type="EMBL" id="AB237912">
    <property type="protein sequence ID" value="BAE46648.1"/>
    <property type="molecule type" value="Genomic_DNA"/>
</dbReference>
<dbReference type="RefSeq" id="YP_358673.1">
    <property type="nucleotide sequence ID" value="NC_007500.1"/>
</dbReference>
<dbReference type="SMR" id="Q3C1H9"/>
<dbReference type="GeneID" id="3735097"/>
<dbReference type="KEGG" id="nsy:3735097"/>
<dbReference type="OrthoDB" id="17910at4085"/>
<dbReference type="Proteomes" id="UP000189701">
    <property type="component" value="Chloroplast Pltd"/>
</dbReference>
<dbReference type="GO" id="GO:0009535">
    <property type="term" value="C:chloroplast thylakoid membrane"/>
    <property type="evidence" value="ECO:0007669"/>
    <property type="project" value="UniProtKB-SubCell"/>
</dbReference>
<dbReference type="GO" id="GO:0009522">
    <property type="term" value="C:photosystem I"/>
    <property type="evidence" value="ECO:0007669"/>
    <property type="project" value="UniProtKB-KW"/>
</dbReference>
<dbReference type="GO" id="GO:0051539">
    <property type="term" value="F:4 iron, 4 sulfur cluster binding"/>
    <property type="evidence" value="ECO:0007669"/>
    <property type="project" value="UniProtKB-KW"/>
</dbReference>
<dbReference type="GO" id="GO:0016168">
    <property type="term" value="F:chlorophyll binding"/>
    <property type="evidence" value="ECO:0007669"/>
    <property type="project" value="UniProtKB-KW"/>
</dbReference>
<dbReference type="GO" id="GO:0009055">
    <property type="term" value="F:electron transfer activity"/>
    <property type="evidence" value="ECO:0007669"/>
    <property type="project" value="UniProtKB-UniRule"/>
</dbReference>
<dbReference type="GO" id="GO:0000287">
    <property type="term" value="F:magnesium ion binding"/>
    <property type="evidence" value="ECO:0007669"/>
    <property type="project" value="UniProtKB-UniRule"/>
</dbReference>
<dbReference type="GO" id="GO:0016491">
    <property type="term" value="F:oxidoreductase activity"/>
    <property type="evidence" value="ECO:0007669"/>
    <property type="project" value="UniProtKB-KW"/>
</dbReference>
<dbReference type="GO" id="GO:0015979">
    <property type="term" value="P:photosynthesis"/>
    <property type="evidence" value="ECO:0007669"/>
    <property type="project" value="UniProtKB-UniRule"/>
</dbReference>
<dbReference type="FunFam" id="1.20.1130.10:FF:000001">
    <property type="entry name" value="Photosystem I P700 chlorophyll a apoprotein A2"/>
    <property type="match status" value="1"/>
</dbReference>
<dbReference type="Gene3D" id="1.20.1130.10">
    <property type="entry name" value="Photosystem I PsaA/PsaB"/>
    <property type="match status" value="1"/>
</dbReference>
<dbReference type="HAMAP" id="MF_00482">
    <property type="entry name" value="PSI_PsaB"/>
    <property type="match status" value="1"/>
</dbReference>
<dbReference type="InterPro" id="IPR001280">
    <property type="entry name" value="PSI_PsaA/B"/>
</dbReference>
<dbReference type="InterPro" id="IPR020586">
    <property type="entry name" value="PSI_PsaA/B_CS"/>
</dbReference>
<dbReference type="InterPro" id="IPR036408">
    <property type="entry name" value="PSI_PsaA/B_sf"/>
</dbReference>
<dbReference type="InterPro" id="IPR006244">
    <property type="entry name" value="PSI_PsaB"/>
</dbReference>
<dbReference type="NCBIfam" id="TIGR01336">
    <property type="entry name" value="psaB"/>
    <property type="match status" value="1"/>
</dbReference>
<dbReference type="PANTHER" id="PTHR30128">
    <property type="entry name" value="OUTER MEMBRANE PROTEIN, OMPA-RELATED"/>
    <property type="match status" value="1"/>
</dbReference>
<dbReference type="PANTHER" id="PTHR30128:SF19">
    <property type="entry name" value="PHOTOSYSTEM I P700 CHLOROPHYLL A APOPROTEIN A1-RELATED"/>
    <property type="match status" value="1"/>
</dbReference>
<dbReference type="Pfam" id="PF00223">
    <property type="entry name" value="PsaA_PsaB"/>
    <property type="match status" value="1"/>
</dbReference>
<dbReference type="PIRSF" id="PIRSF002905">
    <property type="entry name" value="PSI_A"/>
    <property type="match status" value="1"/>
</dbReference>
<dbReference type="PRINTS" id="PR00257">
    <property type="entry name" value="PHOTSYSPSAAB"/>
</dbReference>
<dbReference type="SUPFAM" id="SSF81558">
    <property type="entry name" value="Photosystem I subunits PsaA/PsaB"/>
    <property type="match status" value="1"/>
</dbReference>
<dbReference type="PROSITE" id="PS00419">
    <property type="entry name" value="PHOTOSYSTEM_I_PSAAB"/>
    <property type="match status" value="1"/>
</dbReference>
<geneLocation type="chloroplast"/>